<name>ARP19_TAEGU</name>
<reference key="1">
    <citation type="journal article" date="2006" name="Proc. Natl. Acad. Sci. U.S.A.">
        <title>A molecular neuroethological approach for identifying and characterizing a cascade of behaviorally regulated genes.</title>
        <authorList>
            <person name="Wada K."/>
            <person name="Howard J.T."/>
            <person name="McConnell P."/>
            <person name="Whitney O."/>
            <person name="Lints T."/>
            <person name="Rivas M.V."/>
            <person name="Horita H."/>
            <person name="Patterson M.A."/>
            <person name="White S.A."/>
            <person name="Scharff C."/>
            <person name="Haesler S."/>
            <person name="Zhao S."/>
            <person name="Sakaguchi H."/>
            <person name="Hagiwara M."/>
            <person name="Shiraki T."/>
            <person name="Hirozane-Kishikawa T."/>
            <person name="Skene P."/>
            <person name="Hayashizaki Y."/>
            <person name="Carninci P."/>
            <person name="Jarvis E.D."/>
        </authorList>
    </citation>
    <scope>NUCLEOTIDE SEQUENCE [LARGE SCALE MRNA] (ISOFORMS 1 AND 2)</scope>
    <source>
        <tissue>Brain</tissue>
    </source>
</reference>
<gene>
    <name type="primary">ARPP19</name>
</gene>
<comment type="function">
    <text evidence="2">Protein phosphatase inhibitor that specifically inhibits protein phosphatase 2A (PP2A) during mitosis (By similarity). Inhibition of PP2A is enhanced when ARPP19 is phosphorylated (By similarity). When phosphorylated at Ser-62 during mitosis, specifically interacts with PPP2R2D (PR55-delta) and inhibits its activity, leading to inactivation of PP2A, an essential condition to keep cyclin-B1-CDK1 activity high during M phase (By similarity).</text>
</comment>
<comment type="subunit">
    <text evidence="1">Interacts (when phosphorylated at Ser-62) with PPP2R2D.</text>
</comment>
<comment type="subcellular location">
    <subcellularLocation>
        <location evidence="1">Cytoplasm</location>
    </subcellularLocation>
</comment>
<comment type="alternative products">
    <event type="alternative splicing"/>
    <isoform>
        <id>B5G1C4-1</id>
        <name>1</name>
        <sequence type="displayed"/>
    </isoform>
    <isoform>
        <id>B5G1C4-2</id>
        <name>2</name>
        <sequence type="described" ref="VSP_041056"/>
    </isoform>
</comment>
<comment type="PTM">
    <text evidence="1">Phosphorylation at Ser-62 by MASTL/GWL during mitosis is essential for interaction with PPP2R2D (PR55-delta) and subsequent inactivation of PP2A.</text>
</comment>
<comment type="similarity">
    <text evidence="6">Belongs to the endosulfine family.</text>
</comment>
<evidence type="ECO:0000250" key="1"/>
<evidence type="ECO:0000250" key="2">
    <source>
        <dbReference type="UniProtKB" id="P56211"/>
    </source>
</evidence>
<evidence type="ECO:0000250" key="3">
    <source>
        <dbReference type="UniProtKB" id="P56212"/>
    </source>
</evidence>
<evidence type="ECO:0000256" key="4">
    <source>
        <dbReference type="SAM" id="MobiDB-lite"/>
    </source>
</evidence>
<evidence type="ECO:0000303" key="5">
    <source>
    </source>
</evidence>
<evidence type="ECO:0000305" key="6"/>
<dbReference type="EMBL" id="DQ215487">
    <property type="protein sequence ID" value="ACH45085.1"/>
    <property type="molecule type" value="mRNA"/>
</dbReference>
<dbReference type="EMBL" id="DQ215488">
    <property type="protein sequence ID" value="ACH45086.1"/>
    <property type="molecule type" value="mRNA"/>
</dbReference>
<dbReference type="EMBL" id="DQ215489">
    <property type="protein sequence ID" value="ACH45087.1"/>
    <property type="molecule type" value="mRNA"/>
</dbReference>
<dbReference type="RefSeq" id="NP_001232557.1">
    <molecule id="B5G1C4-2"/>
    <property type="nucleotide sequence ID" value="NM_001245628.3"/>
</dbReference>
<dbReference type="RefSeq" id="XP_012428224.1">
    <molecule id="B5G1C4-2"/>
    <property type="nucleotide sequence ID" value="XM_012572770.4"/>
</dbReference>
<dbReference type="RefSeq" id="XP_030136793.1">
    <molecule id="B5G1C4-1"/>
    <property type="nucleotide sequence ID" value="XM_030280933.3"/>
</dbReference>
<dbReference type="SMR" id="B5G1C4"/>
<dbReference type="FunCoup" id="B5G1C4">
    <property type="interactions" value="628"/>
</dbReference>
<dbReference type="STRING" id="59729.ENSTGUP00000026693"/>
<dbReference type="GeneID" id="100190388"/>
<dbReference type="KEGG" id="tgu:100190388"/>
<dbReference type="CTD" id="10776"/>
<dbReference type="InParanoid" id="B5G1C4"/>
<dbReference type="OrthoDB" id="5949865at2759"/>
<dbReference type="Proteomes" id="UP000007754">
    <property type="component" value="Unplaced"/>
</dbReference>
<dbReference type="GO" id="GO:0005737">
    <property type="term" value="C:cytoplasm"/>
    <property type="evidence" value="ECO:0007669"/>
    <property type="project" value="UniProtKB-SubCell"/>
</dbReference>
<dbReference type="GO" id="GO:0019212">
    <property type="term" value="F:phosphatase inhibitor activity"/>
    <property type="evidence" value="ECO:0000250"/>
    <property type="project" value="UniProtKB"/>
</dbReference>
<dbReference type="GO" id="GO:0051721">
    <property type="term" value="F:protein phosphatase 2A binding"/>
    <property type="evidence" value="ECO:0000250"/>
    <property type="project" value="UniProtKB"/>
</dbReference>
<dbReference type="GO" id="GO:0004864">
    <property type="term" value="F:protein phosphatase inhibitor activity"/>
    <property type="evidence" value="ECO:0007669"/>
    <property type="project" value="UniProtKB-KW"/>
</dbReference>
<dbReference type="GO" id="GO:0019888">
    <property type="term" value="F:protein phosphatase regulator activity"/>
    <property type="evidence" value="ECO:0000250"/>
    <property type="project" value="UniProtKB"/>
</dbReference>
<dbReference type="GO" id="GO:0051301">
    <property type="term" value="P:cell division"/>
    <property type="evidence" value="ECO:0007669"/>
    <property type="project" value="UniProtKB-KW"/>
</dbReference>
<dbReference type="GO" id="GO:0000086">
    <property type="term" value="P:G2/M transition of mitotic cell cycle"/>
    <property type="evidence" value="ECO:0000250"/>
    <property type="project" value="UniProtKB"/>
</dbReference>
<dbReference type="GO" id="GO:0000278">
    <property type="term" value="P:mitotic cell cycle"/>
    <property type="evidence" value="ECO:0000250"/>
    <property type="project" value="UniProtKB"/>
</dbReference>
<dbReference type="InterPro" id="IPR006760">
    <property type="entry name" value="Endosulphine"/>
</dbReference>
<dbReference type="PANTHER" id="PTHR10358:SF4">
    <property type="entry name" value="CAMP-REGULATED PHOSPHOPROTEIN 19"/>
    <property type="match status" value="1"/>
</dbReference>
<dbReference type="PANTHER" id="PTHR10358">
    <property type="entry name" value="ENDOSULFINE"/>
    <property type="match status" value="1"/>
</dbReference>
<dbReference type="Pfam" id="PF04667">
    <property type="entry name" value="Endosulfine"/>
    <property type="match status" value="1"/>
</dbReference>
<protein>
    <recommendedName>
        <fullName evidence="2">cAMP-regulated phosphoprotein 19</fullName>
        <shortName>ARPP-19</shortName>
    </recommendedName>
</protein>
<keyword id="KW-0025">Alternative splicing</keyword>
<keyword id="KW-0131">Cell cycle</keyword>
<keyword id="KW-0132">Cell division</keyword>
<keyword id="KW-0963">Cytoplasm</keyword>
<keyword id="KW-0498">Mitosis</keyword>
<keyword id="KW-0597">Phosphoprotein</keyword>
<keyword id="KW-0650">Protein phosphatase inhibitor</keyword>
<keyword id="KW-1185">Reference proteome</keyword>
<sequence length="112" mass="12349">MSAESPEPASAEEQKEMEDKVLSPEKAEEAKLKARYPHLGQKPGGSDFLRKRLQKGQKYFDSGDYNMAKAKMKNKQLPTAAPDKTEVTGDHIPTPQDLPQRKPSLVASKLAG</sequence>
<proteinExistence type="inferred from homology"/>
<organism>
    <name type="scientific">Taeniopygia guttata</name>
    <name type="common">Zebra finch</name>
    <name type="synonym">Poephila guttata</name>
    <dbReference type="NCBI Taxonomy" id="59729"/>
    <lineage>
        <taxon>Eukaryota</taxon>
        <taxon>Metazoa</taxon>
        <taxon>Chordata</taxon>
        <taxon>Craniata</taxon>
        <taxon>Vertebrata</taxon>
        <taxon>Euteleostomi</taxon>
        <taxon>Archelosauria</taxon>
        <taxon>Archosauria</taxon>
        <taxon>Dinosauria</taxon>
        <taxon>Saurischia</taxon>
        <taxon>Theropoda</taxon>
        <taxon>Coelurosauria</taxon>
        <taxon>Aves</taxon>
        <taxon>Neognathae</taxon>
        <taxon>Neoaves</taxon>
        <taxon>Telluraves</taxon>
        <taxon>Australaves</taxon>
        <taxon>Passeriformes</taxon>
        <taxon>Passeroidea</taxon>
        <taxon>Estrildidae</taxon>
        <taxon>Estrildinae</taxon>
        <taxon>Taeniopygia</taxon>
    </lineage>
</organism>
<accession>B5G1C4</accession>
<accession>B5G1C5</accession>
<feature type="chain" id="PRO_0000408320" description="cAMP-regulated phosphoprotein 19">
    <location>
        <begin position="1"/>
        <end position="112"/>
    </location>
</feature>
<feature type="region of interest" description="Disordered" evidence="4">
    <location>
        <begin position="1"/>
        <end position="49"/>
    </location>
</feature>
<feature type="region of interest" description="Disordered" evidence="4">
    <location>
        <begin position="72"/>
        <end position="112"/>
    </location>
</feature>
<feature type="compositionally biased region" description="Low complexity" evidence="4">
    <location>
        <begin position="1"/>
        <end position="11"/>
    </location>
</feature>
<feature type="compositionally biased region" description="Basic and acidic residues" evidence="4">
    <location>
        <begin position="12"/>
        <end position="32"/>
    </location>
</feature>
<feature type="modified residue" description="Phosphoserine; by GWL" evidence="2">
    <location>
        <position position="62"/>
    </location>
</feature>
<feature type="modified residue" description="Phosphoserine; by GWL" evidence="2">
    <location>
        <position position="104"/>
    </location>
</feature>
<feature type="modified residue" description="Phosphoserine; by PKA" evidence="3">
    <location>
        <position position="104"/>
    </location>
</feature>
<feature type="splice variant" id="VSP_041056" description="In isoform 2." evidence="5">
    <location>
        <begin position="1"/>
        <end position="16"/>
    </location>
</feature>
<feature type="sequence conflict" description="In Ref. 1; ACH45085." evidence="6" ref="1">
    <original>MA</original>
    <variation>FF</variation>
    <location>
        <begin position="67"/>
        <end position="68"/>
    </location>
</feature>
<feature type="sequence conflict" description="In Ref. 1; ACH45085." evidence="6" ref="1">
    <original>KM</original>
    <variation>PP</variation>
    <location>
        <begin position="71"/>
        <end position="72"/>
    </location>
</feature>